<organism>
    <name type="scientific">Strawberry mild yellow edge-associated virus</name>
    <name type="common">SMYEaV</name>
    <dbReference type="NCBI Taxonomy" id="12187"/>
    <lineage>
        <taxon>Viruses</taxon>
        <taxon>Riboviria</taxon>
        <taxon>Orthornavirae</taxon>
        <taxon>Kitrinoviricota</taxon>
        <taxon>Alsuviricetes</taxon>
        <taxon>Tymovirales</taxon>
        <taxon>Alphaflexiviridae</taxon>
        <taxon>Potexvirus</taxon>
    </lineage>
</organism>
<protein>
    <recommendedName>
        <fullName>Movement protein TGBp3</fullName>
    </recommendedName>
    <alternativeName>
        <fullName>8.1 kDa protein</fullName>
    </alternativeName>
    <alternativeName>
        <fullName>Triple gene block 3 protein</fullName>
        <shortName>TGBp3</shortName>
    </alternativeName>
</protein>
<comment type="function">
    <text evidence="1">Plays a role in viral cell-to-cell propagation, by facilitating genome transport to neighboring plant cells through plasmosdesmata. May induce the formation of granular vesicles derived from the Endoplasmic reticulum, which align on actin filaments (By similarity).</text>
</comment>
<comment type="subcellular location">
    <subcellularLocation>
        <location evidence="1">Host endoplasmic reticulum membrane</location>
    </subcellularLocation>
</comment>
<comment type="miscellaneous">
    <text>TGBp1, TGBp2 and TGBp3 seem to act together for cell-to-cell propagation. TGBp1 is the main movement protein that physically cross the plasmodesma with the viral genome. TGBp2 and TGBp3 would facilitate TGBp1 function.</text>
</comment>
<comment type="similarity">
    <text evidence="3">Belongs to the Tymovirales TGBp3 protein family.</text>
</comment>
<sequence>MRVLDLILALITAAVVGYTIALVSNSGCYVHFDGRSATTTCPPGPWVESIANGLYTAGLARPHPEPECERRQSSW</sequence>
<reference key="1">
    <citation type="journal article" date="1992" name="J. Gen. Virol.">
        <title>The nucleotide sequence and genome organization of strawberry mild yellow edge-associated potexvirus.</title>
        <authorList>
            <person name="Jelkmann W."/>
            <person name="Maiss E."/>
            <person name="Martin R.R."/>
        </authorList>
    </citation>
    <scope>NUCLEOTIDE SEQUENCE [GENOMIC RNA]</scope>
    <source>
        <strain>MY-18</strain>
    </source>
</reference>
<evidence type="ECO:0000250" key="1"/>
<evidence type="ECO:0000255" key="2"/>
<evidence type="ECO:0000305" key="3"/>
<gene>
    <name type="ORF">ORF4</name>
</gene>
<feature type="chain" id="PRO_0000222649" description="Movement protein TGBp3">
    <location>
        <begin position="1"/>
        <end position="75"/>
    </location>
</feature>
<feature type="topological domain" description="Lumenal" evidence="2">
    <location>
        <begin position="1"/>
        <end position="2"/>
    </location>
</feature>
<feature type="transmembrane region" description="Helical" evidence="2">
    <location>
        <begin position="3"/>
        <end position="23"/>
    </location>
</feature>
<feature type="topological domain" description="Cytoplasmic" evidence="2">
    <location>
        <begin position="24"/>
        <end position="75"/>
    </location>
</feature>
<accession>Q00848</accession>
<name>TGB3_SMYEA</name>
<organismHost>
    <name type="scientific">Chenopodium quinoa</name>
    <name type="common">Quinoa</name>
    <dbReference type="NCBI Taxonomy" id="63459"/>
</organismHost>
<organismHost>
    <name type="scientific">Fragaria vesca</name>
    <name type="common">Woodland strawberry</name>
    <name type="synonym">Potentilla vesca</name>
    <dbReference type="NCBI Taxonomy" id="57918"/>
</organismHost>
<organismHost>
    <name type="scientific">Rubus rosifolius</name>
    <dbReference type="NCBI Taxonomy" id="59498"/>
</organismHost>
<keyword id="KW-1038">Host endoplasmic reticulum</keyword>
<keyword id="KW-1043">Host membrane</keyword>
<keyword id="KW-0472">Membrane</keyword>
<keyword id="KW-1185">Reference proteome</keyword>
<keyword id="KW-0812">Transmembrane</keyword>
<keyword id="KW-1133">Transmembrane helix</keyword>
<keyword id="KW-0813">Transport</keyword>
<keyword id="KW-0916">Viral movement protein</keyword>
<proteinExistence type="inferred from homology"/>
<dbReference type="EMBL" id="D12517">
    <property type="protein sequence ID" value="BAA02085.1"/>
    <property type="molecule type" value="Genomic_RNA"/>
</dbReference>
<dbReference type="PIR" id="JQ1429">
    <property type="entry name" value="JQ1429"/>
</dbReference>
<dbReference type="RefSeq" id="NP_620645.1">
    <property type="nucleotide sequence ID" value="NC_003794.1"/>
</dbReference>
<dbReference type="KEGG" id="vg:944371"/>
<dbReference type="Proteomes" id="UP000007225">
    <property type="component" value="Genome"/>
</dbReference>
<dbReference type="GO" id="GO:0044167">
    <property type="term" value="C:host cell endoplasmic reticulum membrane"/>
    <property type="evidence" value="ECO:0007669"/>
    <property type="project" value="UniProtKB-SubCell"/>
</dbReference>
<dbReference type="GO" id="GO:0016020">
    <property type="term" value="C:membrane"/>
    <property type="evidence" value="ECO:0007669"/>
    <property type="project" value="UniProtKB-KW"/>
</dbReference>
<dbReference type="GO" id="GO:0046740">
    <property type="term" value="P:transport of virus in host, cell to cell"/>
    <property type="evidence" value="ECO:0007669"/>
    <property type="project" value="UniProtKB-KW"/>
</dbReference>
<dbReference type="InterPro" id="IPR003411">
    <property type="entry name" value="TGBp3"/>
</dbReference>
<dbReference type="Pfam" id="PF02495">
    <property type="entry name" value="TGBp3"/>
    <property type="match status" value="1"/>
</dbReference>